<proteinExistence type="inferred from homology"/>
<feature type="chain" id="PRO_0000047893" description="DNA-directed RNA polymerase subunit beta">
    <location>
        <begin position="1"/>
        <end position="1342"/>
    </location>
</feature>
<feature type="modified residue" description="N6-acetyllysine" evidence="1">
    <location>
        <position position="1022"/>
    </location>
</feature>
<feature type="modified residue" description="N6-acetyllysine" evidence="1">
    <location>
        <position position="1200"/>
    </location>
</feature>
<reference key="1">
    <citation type="journal article" date="2002" name="Proc. Natl. Acad. Sci. U.S.A.">
        <title>Extensive mosaic structure revealed by the complete genome sequence of uropathogenic Escherichia coli.</title>
        <authorList>
            <person name="Welch R.A."/>
            <person name="Burland V."/>
            <person name="Plunkett G. III"/>
            <person name="Redford P."/>
            <person name="Roesch P."/>
            <person name="Rasko D."/>
            <person name="Buckles E.L."/>
            <person name="Liou S.-R."/>
            <person name="Boutin A."/>
            <person name="Hackett J."/>
            <person name="Stroud D."/>
            <person name="Mayhew G.F."/>
            <person name="Rose D.J."/>
            <person name="Zhou S."/>
            <person name="Schwartz D.C."/>
            <person name="Perna N.T."/>
            <person name="Mobley H.L.T."/>
            <person name="Donnenberg M.S."/>
            <person name="Blattner F.R."/>
        </authorList>
    </citation>
    <scope>NUCLEOTIDE SEQUENCE [LARGE SCALE GENOMIC DNA]</scope>
    <source>
        <strain>CFT073 / ATCC 700928 / UPEC</strain>
    </source>
</reference>
<name>RPOB_ECOL6</name>
<organism>
    <name type="scientific">Escherichia coli O6:H1 (strain CFT073 / ATCC 700928 / UPEC)</name>
    <dbReference type="NCBI Taxonomy" id="199310"/>
    <lineage>
        <taxon>Bacteria</taxon>
        <taxon>Pseudomonadati</taxon>
        <taxon>Pseudomonadota</taxon>
        <taxon>Gammaproteobacteria</taxon>
        <taxon>Enterobacterales</taxon>
        <taxon>Enterobacteriaceae</taxon>
        <taxon>Escherichia</taxon>
    </lineage>
</organism>
<dbReference type="EC" id="2.7.7.6" evidence="1"/>
<dbReference type="EMBL" id="AE014075">
    <property type="protein sequence ID" value="AAN83372.1"/>
    <property type="status" value="ALT_INIT"/>
    <property type="molecule type" value="Genomic_DNA"/>
</dbReference>
<dbReference type="RefSeq" id="WP_000263098.1">
    <property type="nucleotide sequence ID" value="NZ_CP051263.1"/>
</dbReference>
<dbReference type="SMR" id="P0A8V3"/>
<dbReference type="STRING" id="199310.c4944"/>
<dbReference type="GeneID" id="93777907"/>
<dbReference type="KEGG" id="ecc:c4944"/>
<dbReference type="eggNOG" id="COG0085">
    <property type="taxonomic scope" value="Bacteria"/>
</dbReference>
<dbReference type="HOGENOM" id="CLU_000524_4_0_6"/>
<dbReference type="Proteomes" id="UP000001410">
    <property type="component" value="Chromosome"/>
</dbReference>
<dbReference type="GO" id="GO:0000428">
    <property type="term" value="C:DNA-directed RNA polymerase complex"/>
    <property type="evidence" value="ECO:0007669"/>
    <property type="project" value="UniProtKB-KW"/>
</dbReference>
<dbReference type="GO" id="GO:0003677">
    <property type="term" value="F:DNA binding"/>
    <property type="evidence" value="ECO:0007669"/>
    <property type="project" value="UniProtKB-UniRule"/>
</dbReference>
<dbReference type="GO" id="GO:0003899">
    <property type="term" value="F:DNA-directed RNA polymerase activity"/>
    <property type="evidence" value="ECO:0007669"/>
    <property type="project" value="UniProtKB-UniRule"/>
</dbReference>
<dbReference type="GO" id="GO:0032549">
    <property type="term" value="F:ribonucleoside binding"/>
    <property type="evidence" value="ECO:0007669"/>
    <property type="project" value="InterPro"/>
</dbReference>
<dbReference type="GO" id="GO:0006351">
    <property type="term" value="P:DNA-templated transcription"/>
    <property type="evidence" value="ECO:0007669"/>
    <property type="project" value="UniProtKB-UniRule"/>
</dbReference>
<dbReference type="CDD" id="cd00653">
    <property type="entry name" value="RNA_pol_B_RPB2"/>
    <property type="match status" value="1"/>
</dbReference>
<dbReference type="FunFam" id="2.30.150.10:FF:000001">
    <property type="entry name" value="DNA-directed RNA polymerase subunit beta"/>
    <property type="match status" value="1"/>
</dbReference>
<dbReference type="FunFam" id="2.40.270.10:FF:000003">
    <property type="entry name" value="DNA-directed RNA polymerase subunit beta"/>
    <property type="match status" value="1"/>
</dbReference>
<dbReference type="FunFam" id="2.40.270.10:FF:000004">
    <property type="entry name" value="DNA-directed RNA polymerase subunit beta"/>
    <property type="match status" value="1"/>
</dbReference>
<dbReference type="FunFam" id="2.40.50.100:FF:000006">
    <property type="entry name" value="DNA-directed RNA polymerase subunit beta"/>
    <property type="match status" value="1"/>
</dbReference>
<dbReference type="FunFam" id="2.40.50.150:FF:000001">
    <property type="entry name" value="DNA-directed RNA polymerase subunit beta"/>
    <property type="match status" value="1"/>
</dbReference>
<dbReference type="FunFam" id="3.90.1100.10:FF:000002">
    <property type="entry name" value="DNA-directed RNA polymerase subunit beta"/>
    <property type="match status" value="1"/>
</dbReference>
<dbReference type="FunFam" id="3.90.1110.10:FF:000001">
    <property type="entry name" value="DNA-directed RNA polymerase subunit beta"/>
    <property type="match status" value="1"/>
</dbReference>
<dbReference type="FunFam" id="3.90.1110.10:FF:000004">
    <property type="entry name" value="DNA-directed RNA polymerase subunit beta"/>
    <property type="match status" value="1"/>
</dbReference>
<dbReference type="FunFam" id="3.90.1800.10:FF:000001">
    <property type="entry name" value="DNA-directed RNA polymerase subunit beta"/>
    <property type="match status" value="1"/>
</dbReference>
<dbReference type="Gene3D" id="2.40.50.100">
    <property type="match status" value="1"/>
</dbReference>
<dbReference type="Gene3D" id="2.40.50.150">
    <property type="match status" value="1"/>
</dbReference>
<dbReference type="Gene3D" id="3.90.1100.10">
    <property type="match status" value="2"/>
</dbReference>
<dbReference type="Gene3D" id="6.10.140.1670">
    <property type="match status" value="1"/>
</dbReference>
<dbReference type="Gene3D" id="2.30.150.10">
    <property type="entry name" value="DNA-directed RNA polymerase, beta subunit, external 1 domain"/>
    <property type="match status" value="1"/>
</dbReference>
<dbReference type="Gene3D" id="2.40.270.10">
    <property type="entry name" value="DNA-directed RNA polymerase, subunit 2, domain 6"/>
    <property type="match status" value="1"/>
</dbReference>
<dbReference type="Gene3D" id="3.90.1800.10">
    <property type="entry name" value="RNA polymerase alpha subunit dimerisation domain"/>
    <property type="match status" value="1"/>
</dbReference>
<dbReference type="Gene3D" id="3.90.1110.10">
    <property type="entry name" value="RNA polymerase Rpb2, domain 2"/>
    <property type="match status" value="1"/>
</dbReference>
<dbReference type="HAMAP" id="MF_01321">
    <property type="entry name" value="RNApol_bact_RpoB"/>
    <property type="match status" value="1"/>
</dbReference>
<dbReference type="InterPro" id="IPR042107">
    <property type="entry name" value="DNA-dir_RNA_pol_bsu_ext_1_sf"/>
</dbReference>
<dbReference type="InterPro" id="IPR019462">
    <property type="entry name" value="DNA-dir_RNA_pol_bsu_external_1"/>
</dbReference>
<dbReference type="InterPro" id="IPR015712">
    <property type="entry name" value="DNA-dir_RNA_pol_su2"/>
</dbReference>
<dbReference type="InterPro" id="IPR007120">
    <property type="entry name" value="DNA-dir_RNAP_su2_dom"/>
</dbReference>
<dbReference type="InterPro" id="IPR037033">
    <property type="entry name" value="DNA-dir_RNAP_su2_hyb_sf"/>
</dbReference>
<dbReference type="InterPro" id="IPR010243">
    <property type="entry name" value="RNA_pol_bsu_bac"/>
</dbReference>
<dbReference type="InterPro" id="IPR007121">
    <property type="entry name" value="RNA_pol_bsu_CS"/>
</dbReference>
<dbReference type="InterPro" id="IPR007644">
    <property type="entry name" value="RNA_pol_bsu_protrusion"/>
</dbReference>
<dbReference type="InterPro" id="IPR007642">
    <property type="entry name" value="RNA_pol_Rpb2_2"/>
</dbReference>
<dbReference type="InterPro" id="IPR037034">
    <property type="entry name" value="RNA_pol_Rpb2_2_sf"/>
</dbReference>
<dbReference type="InterPro" id="IPR007645">
    <property type="entry name" value="RNA_pol_Rpb2_3"/>
</dbReference>
<dbReference type="InterPro" id="IPR007641">
    <property type="entry name" value="RNA_pol_Rpb2_7"/>
</dbReference>
<dbReference type="InterPro" id="IPR014724">
    <property type="entry name" value="RNA_pol_RPB2_OB-fold"/>
</dbReference>
<dbReference type="NCBIfam" id="NF001616">
    <property type="entry name" value="PRK00405.1"/>
    <property type="match status" value="1"/>
</dbReference>
<dbReference type="NCBIfam" id="TIGR02013">
    <property type="entry name" value="rpoB"/>
    <property type="match status" value="1"/>
</dbReference>
<dbReference type="PANTHER" id="PTHR20856">
    <property type="entry name" value="DNA-DIRECTED RNA POLYMERASE I SUBUNIT 2"/>
    <property type="match status" value="1"/>
</dbReference>
<dbReference type="Pfam" id="PF04563">
    <property type="entry name" value="RNA_pol_Rpb2_1"/>
    <property type="match status" value="1"/>
</dbReference>
<dbReference type="Pfam" id="PF04561">
    <property type="entry name" value="RNA_pol_Rpb2_2"/>
    <property type="match status" value="2"/>
</dbReference>
<dbReference type="Pfam" id="PF04565">
    <property type="entry name" value="RNA_pol_Rpb2_3"/>
    <property type="match status" value="1"/>
</dbReference>
<dbReference type="Pfam" id="PF10385">
    <property type="entry name" value="RNA_pol_Rpb2_45"/>
    <property type="match status" value="1"/>
</dbReference>
<dbReference type="Pfam" id="PF00562">
    <property type="entry name" value="RNA_pol_Rpb2_6"/>
    <property type="match status" value="1"/>
</dbReference>
<dbReference type="Pfam" id="PF04560">
    <property type="entry name" value="RNA_pol_Rpb2_7"/>
    <property type="match status" value="1"/>
</dbReference>
<dbReference type="SUPFAM" id="SSF64484">
    <property type="entry name" value="beta and beta-prime subunits of DNA dependent RNA-polymerase"/>
    <property type="match status" value="1"/>
</dbReference>
<dbReference type="PROSITE" id="PS01166">
    <property type="entry name" value="RNA_POL_BETA"/>
    <property type="match status" value="1"/>
</dbReference>
<evidence type="ECO:0000255" key="1">
    <source>
        <dbReference type="HAMAP-Rule" id="MF_01321"/>
    </source>
</evidence>
<evidence type="ECO:0000305" key="2"/>
<gene>
    <name evidence="1" type="primary">rpoB</name>
    <name type="ordered locus">c4944</name>
</gene>
<sequence>MVYSYTEKKRIRKDFGKRPQVLDVPYLLSIQLDSFQKFIEQDPEGQYGLEAAFRSVFPIQSYSGNSELQYVSYRLGEPVFDVQECQIRGVTYSAPLRVKLRLVIYEREAPEGTVKDIKEQEVYMGEIPLMTDNGTFVINGTERVIVSQLHRSPGVFFDSDKGKTHSSGKVLYNARIIPYRGSWLDFEFDPKDNLFVRIDRRRKLPATIILRALNYTTEQILDLFFEKVIFEIRDNKLQMELVPERLRGETASFDIEANGKVYVEKGRRITARHIRQLEKDDVKLIEVPVEYIAGKVVAKDYIDESTGELICAANMELSLDLLAKLSQSGHKRIETLFTNDLDHGPYISETLRVDPTNDRLSALVEIYRMMRPGEPPTREAAESLFENLFFSEDRYDLSAVGRMKFNRSLLREEIEGSGILSKDDIIDVMKKLIDIRNGKGEVDDIDHLGNRRIRSVGEMAENQFRVGLVRVERAVKERLSLGDLDTLMPQDMINAKPISAAVKEFFGSSQLSQFMDQNNPLSEITHKRRISALGPGGLTRERAGFEVRDVHPTHYGRVCPIETPEGPNIGLINSLSVYAQTNEYGFLETPYRKVTDGVVTDEIHYLSAIEEGNYVIAQANSNLDEEGHFVEDLVTCRSKGESSLFSRDQVDYMDVSTQQVVSVGASLIPFLEHDDANRALMGANMQRQAVPTLRADKPLVGTGMERAVAVDSGVTAVAKRGGVVQYVDASRIVIKVNEDEMYPGEAGIDIYNLTKYTRSNQNTCINQMPCVSLGEPVERGDVLADGPSTDLGELALGQNMRVAFMPWNGYNFEDSILVSERVVQEDRFTTIHIQELACVSRDTKLGPEEITADIPNVGEAALSKLDESGIVYIGAEVTGGDILVGKVTPKGETQLTPEEKLLRAIFGEKASDVKDSSLRVPNGVSGTVIDVQVFTRDGVEKDKRALEIEEMQLKQAKKDLSEELQILEAGLFSRIRAVLVAGGVEAEKLDKLPRDRWLELGLTDEEKQNQLEQLAEQYDELKHEFEKKLEAKRRKITQGDDLAPGVLKIVKVYLAVKRRIQPGDKMAGRHGNKGVISKINPIEDMPYDENGTPVDIVLNPLGVPSRMNIGQILETHLGMAAKGIGDKINAMLKQQQEVAKLREFIQRAYDLGADVRQKVDLSTFSDEEVMRLAENLRKGMPIATPVFDGAKEAEIKELLKLGDLPTSGQIRLYDGRTGEQFERPVTVGYMYMLKLNHLVDDKMHARSTGSYSLVTQQPLGGKAQFGGQRFGEMEVWALEAYGAAYTLQEMLTVKSDDVNGRTKMYKNIVDGNHQMEPGMPESFNVLLKEIRSLGINIELEDE</sequence>
<protein>
    <recommendedName>
        <fullName evidence="1">DNA-directed RNA polymerase subunit beta</fullName>
        <shortName evidence="1">RNAP subunit beta</shortName>
        <ecNumber evidence="1">2.7.7.6</ecNumber>
    </recommendedName>
    <alternativeName>
        <fullName evidence="1">RNA polymerase subunit beta</fullName>
    </alternativeName>
    <alternativeName>
        <fullName evidence="1">Transcriptase subunit beta</fullName>
    </alternativeName>
</protein>
<accession>P0A8V3</accession>
<accession>P00575</accession>
<accession>P00576</accession>
<accession>P78242</accession>
<comment type="function">
    <text evidence="1">DNA-dependent RNA polymerase catalyzes the transcription of DNA into RNA using the four ribonucleoside triphosphates as substrates.</text>
</comment>
<comment type="catalytic activity">
    <reaction evidence="1">
        <text>RNA(n) + a ribonucleoside 5'-triphosphate = RNA(n+1) + diphosphate</text>
        <dbReference type="Rhea" id="RHEA:21248"/>
        <dbReference type="Rhea" id="RHEA-COMP:14527"/>
        <dbReference type="Rhea" id="RHEA-COMP:17342"/>
        <dbReference type="ChEBI" id="CHEBI:33019"/>
        <dbReference type="ChEBI" id="CHEBI:61557"/>
        <dbReference type="ChEBI" id="CHEBI:140395"/>
        <dbReference type="EC" id="2.7.7.6"/>
    </reaction>
</comment>
<comment type="subunit">
    <text evidence="1">The RNAP catalytic core consists of 2 alpha, 1 beta, 1 beta' and 1 omega subunit. When a sigma factor is associated with the core the holoenzyme is formed, which can initiate transcription.</text>
</comment>
<comment type="similarity">
    <text evidence="1">Belongs to the RNA polymerase beta chain family.</text>
</comment>
<comment type="sequence caution" evidence="2">
    <conflict type="erroneous initiation">
        <sequence resource="EMBL-CDS" id="AAN83372"/>
    </conflict>
</comment>
<keyword id="KW-0007">Acetylation</keyword>
<keyword id="KW-0240">DNA-directed RNA polymerase</keyword>
<keyword id="KW-0548">Nucleotidyltransferase</keyword>
<keyword id="KW-1185">Reference proteome</keyword>
<keyword id="KW-0804">Transcription</keyword>
<keyword id="KW-0808">Transferase</keyword>